<comment type="function">
    <text evidence="2 3">Shows cytolytic activity on many different cells by forming pore in lipid membranes. In vivo, increases heart rate or kills the animal by cardiac arrest. In addition, it binds to heparin with high affinity, interacts with Kv channel-interacting protein 1 (KCNIP1) in a calcium-independent manner, and binds to integrin alpha-V/beta-3 (ITGAV/ITGB3) with moderate affinity.</text>
</comment>
<comment type="subunit">
    <text evidence="2">Monomer in solution; Homodimer and oligomer in the presence of negatively charged lipids forming a pore with a size ranging between 20 and 30 Angstroms.</text>
</comment>
<comment type="subcellular location">
    <subcellularLocation>
        <location evidence="1">Secreted</location>
    </subcellularLocation>
    <subcellularLocation>
        <location evidence="2">Target cell membrane</location>
    </subcellularLocation>
</comment>
<comment type="tissue specificity">
    <text evidence="4">Expressed by the venom gland.</text>
</comment>
<comment type="miscellaneous">
    <text evidence="4">Is classified as a P-type cytotoxin, since a proline residue stands at position 52 (Pro-31 in standard classification).</text>
</comment>
<comment type="similarity">
    <text evidence="4">Belongs to the three-finger toxin family. Short-chain subfamily. Type IA cytotoxin sub-subfamily.</text>
</comment>
<name>3SAA_NAJAT</name>
<evidence type="ECO:0000250" key="1"/>
<evidence type="ECO:0000250" key="2">
    <source>
        <dbReference type="UniProtKB" id="P60301"/>
    </source>
</evidence>
<evidence type="ECO:0000250" key="3">
    <source>
        <dbReference type="UniProtKB" id="P60304"/>
    </source>
</evidence>
<evidence type="ECO:0000305" key="4"/>
<protein>
    <recommendedName>
        <fullName>Cytotoxin 10</fullName>
    </recommendedName>
    <alternativeName>
        <fullName>Cardiotoxin-10</fullName>
        <shortName>CTX10</shortName>
        <shortName>Ctx-10</shortName>
    </alternativeName>
</protein>
<reference key="1">
    <citation type="journal article" date="2004" name="Biochem. Genet.">
        <title>Molecular cloning and evolution of the genes encoding the precursors of taiwan cobra cardiotoxin and cardiotoxin-like basic protein.</title>
        <authorList>
            <person name="Chang L.-S."/>
            <person name="Lin S.-K."/>
            <person name="Chung C."/>
        </authorList>
    </citation>
    <scope>NUCLEOTIDE SEQUENCE [GENOMIC DNA]</scope>
    <source>
        <tissue>Liver</tissue>
    </source>
</reference>
<sequence length="82" mass="9087">MKTLLLTLVVVVTIVCLDLGYTLKCNQHIPPFYKTCAAGKNLCYKIFMVAAPKVPVKRGCIDVCPKSSDLVKYVCCNTDRCN</sequence>
<feature type="signal peptide" evidence="1">
    <location>
        <begin position="1"/>
        <end position="22"/>
    </location>
</feature>
<feature type="chain" id="PRO_0000035387" description="Cytotoxin 10">
    <location>
        <begin position="23"/>
        <end position="82"/>
    </location>
</feature>
<feature type="disulfide bond" evidence="2">
    <location>
        <begin position="25"/>
        <end position="43"/>
    </location>
</feature>
<feature type="disulfide bond" evidence="2">
    <location>
        <begin position="36"/>
        <end position="60"/>
    </location>
</feature>
<feature type="disulfide bond" evidence="2">
    <location>
        <begin position="64"/>
        <end position="75"/>
    </location>
</feature>
<feature type="disulfide bond" evidence="2">
    <location>
        <begin position="76"/>
        <end position="81"/>
    </location>
</feature>
<accession>Q9W6W6</accession>
<organism>
    <name type="scientific">Naja atra</name>
    <name type="common">Chinese cobra</name>
    <dbReference type="NCBI Taxonomy" id="8656"/>
    <lineage>
        <taxon>Eukaryota</taxon>
        <taxon>Metazoa</taxon>
        <taxon>Chordata</taxon>
        <taxon>Craniata</taxon>
        <taxon>Vertebrata</taxon>
        <taxon>Euteleostomi</taxon>
        <taxon>Lepidosauria</taxon>
        <taxon>Squamata</taxon>
        <taxon>Bifurcata</taxon>
        <taxon>Unidentata</taxon>
        <taxon>Episquamata</taxon>
        <taxon>Toxicofera</taxon>
        <taxon>Serpentes</taxon>
        <taxon>Colubroidea</taxon>
        <taxon>Elapidae</taxon>
        <taxon>Elapinae</taxon>
        <taxon>Naja</taxon>
    </lineage>
</organism>
<dbReference type="EMBL" id="Y18957">
    <property type="protein sequence ID" value="CAB41507.1"/>
    <property type="molecule type" value="Genomic_DNA"/>
</dbReference>
<dbReference type="SMR" id="Q9W6W6"/>
<dbReference type="GO" id="GO:0005576">
    <property type="term" value="C:extracellular region"/>
    <property type="evidence" value="ECO:0007669"/>
    <property type="project" value="UniProtKB-SubCell"/>
</dbReference>
<dbReference type="GO" id="GO:0016020">
    <property type="term" value="C:membrane"/>
    <property type="evidence" value="ECO:0007669"/>
    <property type="project" value="UniProtKB-KW"/>
</dbReference>
<dbReference type="GO" id="GO:0044218">
    <property type="term" value="C:other organism cell membrane"/>
    <property type="evidence" value="ECO:0007669"/>
    <property type="project" value="UniProtKB-KW"/>
</dbReference>
<dbReference type="GO" id="GO:0090729">
    <property type="term" value="F:toxin activity"/>
    <property type="evidence" value="ECO:0007669"/>
    <property type="project" value="UniProtKB-KW"/>
</dbReference>
<dbReference type="GO" id="GO:0031640">
    <property type="term" value="P:killing of cells of another organism"/>
    <property type="evidence" value="ECO:0007669"/>
    <property type="project" value="UniProtKB-KW"/>
</dbReference>
<dbReference type="CDD" id="cd00206">
    <property type="entry name" value="TFP_snake_toxin"/>
    <property type="match status" value="1"/>
</dbReference>
<dbReference type="FunFam" id="2.10.60.10:FF:000024">
    <property type="entry name" value="Cytotoxin 1"/>
    <property type="match status" value="1"/>
</dbReference>
<dbReference type="Gene3D" id="2.10.60.10">
    <property type="entry name" value="CD59"/>
    <property type="match status" value="1"/>
</dbReference>
<dbReference type="InterPro" id="IPR003572">
    <property type="entry name" value="Cytotoxin_Cobra"/>
</dbReference>
<dbReference type="InterPro" id="IPR003571">
    <property type="entry name" value="Snake_3FTx"/>
</dbReference>
<dbReference type="InterPro" id="IPR045860">
    <property type="entry name" value="Snake_toxin-like_sf"/>
</dbReference>
<dbReference type="InterPro" id="IPR018354">
    <property type="entry name" value="Snake_toxin_con_site"/>
</dbReference>
<dbReference type="InterPro" id="IPR054131">
    <property type="entry name" value="Toxin_cobra-type"/>
</dbReference>
<dbReference type="Pfam" id="PF21947">
    <property type="entry name" value="Toxin_cobra-type"/>
    <property type="match status" value="1"/>
</dbReference>
<dbReference type="PRINTS" id="PR00282">
    <property type="entry name" value="CYTOTOXIN"/>
</dbReference>
<dbReference type="SUPFAM" id="SSF57302">
    <property type="entry name" value="Snake toxin-like"/>
    <property type="match status" value="1"/>
</dbReference>
<dbReference type="PROSITE" id="PS00272">
    <property type="entry name" value="SNAKE_TOXIN"/>
    <property type="match status" value="1"/>
</dbReference>
<keyword id="KW-0123">Cardiotoxin</keyword>
<keyword id="KW-0204">Cytolysis</keyword>
<keyword id="KW-1015">Disulfide bond</keyword>
<keyword id="KW-0472">Membrane</keyword>
<keyword id="KW-0964">Secreted</keyword>
<keyword id="KW-0732">Signal</keyword>
<keyword id="KW-1052">Target cell membrane</keyword>
<keyword id="KW-1053">Target membrane</keyword>
<keyword id="KW-0800">Toxin</keyword>
<proteinExistence type="inferred from homology"/>